<proteinExistence type="inferred from homology"/>
<sequence>MLTRKQHELLLFIHERLKETGIPPSFDEMKEALDLASKSGIHRLITALEERGFIRRLPNRARALEVLRLPDSIAPGLSPQKKFAPSVIEGSLGKVASVQPVRPAPAPQNSEAPATVSVPVMGRIAAGVPISAIQNQTHMLSLPPEMIGAGEHYALEVKGDSMIDAGIFDGDTIIIKRGDTANPGEIVVALVDEEEATLKRFRREGASIALEAANPAYETRIFGPDRVHVQGKLVGLIRRY</sequence>
<organism>
    <name type="scientific">Brucella melitensis biotype 1 (strain ATCC 23456 / CCUG 17765 / NCTC 10094 / 16M)</name>
    <dbReference type="NCBI Taxonomy" id="224914"/>
    <lineage>
        <taxon>Bacteria</taxon>
        <taxon>Pseudomonadati</taxon>
        <taxon>Pseudomonadota</taxon>
        <taxon>Alphaproteobacteria</taxon>
        <taxon>Hyphomicrobiales</taxon>
        <taxon>Brucellaceae</taxon>
        <taxon>Brucella/Ochrobactrum group</taxon>
        <taxon>Brucella</taxon>
    </lineage>
</organism>
<protein>
    <recommendedName>
        <fullName evidence="1">LexA repressor</fullName>
        <ecNumber evidence="1">3.4.21.88</ecNumber>
    </recommendedName>
</protein>
<gene>
    <name evidence="1" type="primary">lexA</name>
    <name type="ordered locus">BMEI0840</name>
</gene>
<name>LEXA_BRUME</name>
<keyword id="KW-0068">Autocatalytic cleavage</keyword>
<keyword id="KW-0227">DNA damage</keyword>
<keyword id="KW-0234">DNA repair</keyword>
<keyword id="KW-0235">DNA replication</keyword>
<keyword id="KW-0238">DNA-binding</keyword>
<keyword id="KW-0378">Hydrolase</keyword>
<keyword id="KW-0678">Repressor</keyword>
<keyword id="KW-0742">SOS response</keyword>
<keyword id="KW-0804">Transcription</keyword>
<keyword id="KW-0805">Transcription regulation</keyword>
<dbReference type="EC" id="3.4.21.88" evidence="1"/>
<dbReference type="EMBL" id="AE008917">
    <property type="protein sequence ID" value="AAL52021.1"/>
    <property type="molecule type" value="Genomic_DNA"/>
</dbReference>
<dbReference type="PIR" id="AB3357">
    <property type="entry name" value="AB3357"/>
</dbReference>
<dbReference type="RefSeq" id="WP_004683851.1">
    <property type="nucleotide sequence ID" value="NC_003317.1"/>
</dbReference>
<dbReference type="SMR" id="Q8YHG1"/>
<dbReference type="MEROPS" id="S24.001"/>
<dbReference type="GeneID" id="29593662"/>
<dbReference type="KEGG" id="bme:BMEI0840"/>
<dbReference type="KEGG" id="bmel:DK63_581"/>
<dbReference type="PATRIC" id="fig|224914.52.peg.604"/>
<dbReference type="eggNOG" id="COG1974">
    <property type="taxonomic scope" value="Bacteria"/>
</dbReference>
<dbReference type="PhylomeDB" id="Q8YHG1"/>
<dbReference type="Proteomes" id="UP000000419">
    <property type="component" value="Chromosome I"/>
</dbReference>
<dbReference type="GO" id="GO:0003677">
    <property type="term" value="F:DNA binding"/>
    <property type="evidence" value="ECO:0007669"/>
    <property type="project" value="UniProtKB-UniRule"/>
</dbReference>
<dbReference type="GO" id="GO:0004252">
    <property type="term" value="F:serine-type endopeptidase activity"/>
    <property type="evidence" value="ECO:0007669"/>
    <property type="project" value="UniProtKB-UniRule"/>
</dbReference>
<dbReference type="GO" id="GO:0006281">
    <property type="term" value="P:DNA repair"/>
    <property type="evidence" value="ECO:0007669"/>
    <property type="project" value="UniProtKB-UniRule"/>
</dbReference>
<dbReference type="GO" id="GO:0006260">
    <property type="term" value="P:DNA replication"/>
    <property type="evidence" value="ECO:0007669"/>
    <property type="project" value="UniProtKB-UniRule"/>
</dbReference>
<dbReference type="GO" id="GO:0045892">
    <property type="term" value="P:negative regulation of DNA-templated transcription"/>
    <property type="evidence" value="ECO:0007669"/>
    <property type="project" value="UniProtKB-UniRule"/>
</dbReference>
<dbReference type="GO" id="GO:0006508">
    <property type="term" value="P:proteolysis"/>
    <property type="evidence" value="ECO:0007669"/>
    <property type="project" value="InterPro"/>
</dbReference>
<dbReference type="GO" id="GO:0009432">
    <property type="term" value="P:SOS response"/>
    <property type="evidence" value="ECO:0007669"/>
    <property type="project" value="UniProtKB-UniRule"/>
</dbReference>
<dbReference type="CDD" id="cd06529">
    <property type="entry name" value="S24_LexA-like"/>
    <property type="match status" value="1"/>
</dbReference>
<dbReference type="FunFam" id="1.10.10.10:FF:000102">
    <property type="entry name" value="LexA repressor"/>
    <property type="match status" value="1"/>
</dbReference>
<dbReference type="FunFam" id="2.10.109.10:FF:000001">
    <property type="entry name" value="LexA repressor"/>
    <property type="match status" value="1"/>
</dbReference>
<dbReference type="Gene3D" id="2.10.109.10">
    <property type="entry name" value="Umud Fragment, subunit A"/>
    <property type="match status" value="1"/>
</dbReference>
<dbReference type="Gene3D" id="1.10.10.10">
    <property type="entry name" value="Winged helix-like DNA-binding domain superfamily/Winged helix DNA-binding domain"/>
    <property type="match status" value="1"/>
</dbReference>
<dbReference type="HAMAP" id="MF_00015">
    <property type="entry name" value="LexA"/>
    <property type="match status" value="1"/>
</dbReference>
<dbReference type="InterPro" id="IPR006200">
    <property type="entry name" value="LexA"/>
</dbReference>
<dbReference type="InterPro" id="IPR039418">
    <property type="entry name" value="LexA-like"/>
</dbReference>
<dbReference type="InterPro" id="IPR036286">
    <property type="entry name" value="LexA/Signal_pep-like_sf"/>
</dbReference>
<dbReference type="InterPro" id="IPR006199">
    <property type="entry name" value="LexA_DNA-bd_dom"/>
</dbReference>
<dbReference type="InterPro" id="IPR050077">
    <property type="entry name" value="LexA_repressor"/>
</dbReference>
<dbReference type="InterPro" id="IPR006197">
    <property type="entry name" value="Peptidase_S24_LexA"/>
</dbReference>
<dbReference type="InterPro" id="IPR015927">
    <property type="entry name" value="Peptidase_S24_S26A/B/C"/>
</dbReference>
<dbReference type="InterPro" id="IPR036388">
    <property type="entry name" value="WH-like_DNA-bd_sf"/>
</dbReference>
<dbReference type="InterPro" id="IPR036390">
    <property type="entry name" value="WH_DNA-bd_sf"/>
</dbReference>
<dbReference type="NCBIfam" id="TIGR00498">
    <property type="entry name" value="lexA"/>
    <property type="match status" value="1"/>
</dbReference>
<dbReference type="PANTHER" id="PTHR33516">
    <property type="entry name" value="LEXA REPRESSOR"/>
    <property type="match status" value="1"/>
</dbReference>
<dbReference type="PANTHER" id="PTHR33516:SF2">
    <property type="entry name" value="LEXA REPRESSOR-RELATED"/>
    <property type="match status" value="1"/>
</dbReference>
<dbReference type="Pfam" id="PF01726">
    <property type="entry name" value="LexA_DNA_bind"/>
    <property type="match status" value="1"/>
</dbReference>
<dbReference type="Pfam" id="PF00717">
    <property type="entry name" value="Peptidase_S24"/>
    <property type="match status" value="1"/>
</dbReference>
<dbReference type="PRINTS" id="PR00726">
    <property type="entry name" value="LEXASERPTASE"/>
</dbReference>
<dbReference type="SUPFAM" id="SSF51306">
    <property type="entry name" value="LexA/Signal peptidase"/>
    <property type="match status" value="1"/>
</dbReference>
<dbReference type="SUPFAM" id="SSF46785">
    <property type="entry name" value="Winged helix' DNA-binding domain"/>
    <property type="match status" value="1"/>
</dbReference>
<comment type="function">
    <text evidence="1">Represses a number of genes involved in the response to DNA damage (SOS response), including recA and lexA. In the presence of single-stranded DNA, RecA interacts with LexA causing an autocatalytic cleavage which disrupts the DNA-binding part of LexA, leading to derepression of the SOS regulon and eventually DNA repair.</text>
</comment>
<comment type="catalytic activity">
    <reaction evidence="1">
        <text>Hydrolysis of Ala-|-Gly bond in repressor LexA.</text>
        <dbReference type="EC" id="3.4.21.88"/>
    </reaction>
</comment>
<comment type="subunit">
    <text evidence="1">Homodimer.</text>
</comment>
<comment type="similarity">
    <text evidence="1">Belongs to the peptidase S24 family.</text>
</comment>
<accession>Q8YHG1</accession>
<evidence type="ECO:0000255" key="1">
    <source>
        <dbReference type="HAMAP-Rule" id="MF_00015"/>
    </source>
</evidence>
<feature type="chain" id="PRO_0000170019" description="LexA repressor">
    <location>
        <begin position="1"/>
        <end position="240"/>
    </location>
</feature>
<feature type="DNA-binding region" description="H-T-H motif" evidence="1">
    <location>
        <begin position="26"/>
        <end position="46"/>
    </location>
</feature>
<feature type="active site" description="For autocatalytic cleavage activity" evidence="1">
    <location>
        <position position="161"/>
    </location>
</feature>
<feature type="active site" description="For autocatalytic cleavage activity" evidence="1">
    <location>
        <position position="199"/>
    </location>
</feature>
<feature type="site" description="Cleavage; by autolysis" evidence="1">
    <location>
        <begin position="126"/>
        <end position="127"/>
    </location>
</feature>
<reference key="1">
    <citation type="journal article" date="2002" name="Proc. Natl. Acad. Sci. U.S.A.">
        <title>The genome sequence of the facultative intracellular pathogen Brucella melitensis.</title>
        <authorList>
            <person name="DelVecchio V.G."/>
            <person name="Kapatral V."/>
            <person name="Redkar R.J."/>
            <person name="Patra G."/>
            <person name="Mujer C."/>
            <person name="Los T."/>
            <person name="Ivanova N."/>
            <person name="Anderson I."/>
            <person name="Bhattacharyya A."/>
            <person name="Lykidis A."/>
            <person name="Reznik G."/>
            <person name="Jablonski L."/>
            <person name="Larsen N."/>
            <person name="D'Souza M."/>
            <person name="Bernal A."/>
            <person name="Mazur M."/>
            <person name="Goltsman E."/>
            <person name="Selkov E."/>
            <person name="Elzer P.H."/>
            <person name="Hagius S."/>
            <person name="O'Callaghan D."/>
            <person name="Letesson J.-J."/>
            <person name="Haselkorn R."/>
            <person name="Kyrpides N.C."/>
            <person name="Overbeek R."/>
        </authorList>
    </citation>
    <scope>NUCLEOTIDE SEQUENCE [LARGE SCALE GENOMIC DNA]</scope>
    <source>
        <strain>ATCC 23456 / CCUG 17765 / NCTC 10094 / 16M</strain>
    </source>
</reference>